<comment type="function">
    <text evidence="1">May be involved in vacuolar sorting and osmoregulation.</text>
</comment>
<comment type="cofactor">
    <cofactor evidence="2">
        <name>Zn(2+)</name>
        <dbReference type="ChEBI" id="CHEBI:29105"/>
    </cofactor>
    <text evidence="2">Binds 2 Zn(2+) ions per subunit.</text>
</comment>
<comment type="subcellular location">
    <subcellularLocation>
        <location evidence="1">Vacuole membrane</location>
        <topology evidence="3">Multi-pass membrane protein</topology>
    </subcellularLocation>
</comment>
<comment type="similarity">
    <text evidence="5">Belongs to the peptidase M28 family.</text>
</comment>
<comment type="caution">
    <text evidence="5">Although related to the peptidase M28 family, it lacks some conserved zinc-binding and active site residues and therefore has probably lost hydrolase activity.</text>
</comment>
<organism>
    <name type="scientific">Ajellomyces capsulatus (strain NAm1 / WU24)</name>
    <name type="common">Darling's disease fungus</name>
    <name type="synonym">Histoplasma capsulatum</name>
    <dbReference type="NCBI Taxonomy" id="2059318"/>
    <lineage>
        <taxon>Eukaryota</taxon>
        <taxon>Fungi</taxon>
        <taxon>Dikarya</taxon>
        <taxon>Ascomycota</taxon>
        <taxon>Pezizomycotina</taxon>
        <taxon>Eurotiomycetes</taxon>
        <taxon>Eurotiomycetidae</taxon>
        <taxon>Onygenales</taxon>
        <taxon>Ajellomycetaceae</taxon>
        <taxon>Histoplasma</taxon>
    </lineage>
</organism>
<proteinExistence type="inferred from homology"/>
<protein>
    <recommendedName>
        <fullName evidence="1">Vacuolar membrane protease</fullName>
        <ecNumber evidence="5">3.4.-.-</ecNumber>
    </recommendedName>
    <alternativeName>
        <fullName evidence="1">FXNA-related family protease 1</fullName>
    </alternativeName>
</protein>
<keyword id="KW-0325">Glycoprotein</keyword>
<keyword id="KW-0378">Hydrolase</keyword>
<keyword id="KW-0472">Membrane</keyword>
<keyword id="KW-0479">Metal-binding</keyword>
<keyword id="KW-0482">Metalloprotease</keyword>
<keyword id="KW-0645">Protease</keyword>
<keyword id="KW-1185">Reference proteome</keyword>
<keyword id="KW-0812">Transmembrane</keyword>
<keyword id="KW-1133">Transmembrane helix</keyword>
<keyword id="KW-0926">Vacuole</keyword>
<keyword id="KW-0862">Zinc</keyword>
<reference key="1">
    <citation type="journal article" date="2009" name="Genome Res.">
        <title>Comparative genomic analyses of the human fungal pathogens Coccidioides and their relatives.</title>
        <authorList>
            <person name="Sharpton T.J."/>
            <person name="Stajich J.E."/>
            <person name="Rounsley S.D."/>
            <person name="Gardner M.J."/>
            <person name="Wortman J.R."/>
            <person name="Jordar V.S."/>
            <person name="Maiti R."/>
            <person name="Kodira C.D."/>
            <person name="Neafsey D.E."/>
            <person name="Zeng Q."/>
            <person name="Hung C.-Y."/>
            <person name="McMahan C."/>
            <person name="Muszewska A."/>
            <person name="Grynberg M."/>
            <person name="Mandel M.A."/>
            <person name="Kellner E.M."/>
            <person name="Barker B.M."/>
            <person name="Galgiani J.N."/>
            <person name="Orbach M.J."/>
            <person name="Kirkland T.N."/>
            <person name="Cole G.T."/>
            <person name="Henn M.R."/>
            <person name="Birren B.W."/>
            <person name="Taylor J.W."/>
        </authorList>
    </citation>
    <scope>NUCLEOTIDE SEQUENCE [LARGE SCALE GENOMIC DNA]</scope>
    <source>
        <strain>NAm1 / WU24</strain>
    </source>
</reference>
<feature type="chain" id="PRO_0000411691" description="Vacuolar membrane protease">
    <location>
        <begin position="1"/>
        <end position="850"/>
    </location>
</feature>
<feature type="topological domain" description="Cytoplasmic" evidence="1">
    <location>
        <begin position="1"/>
        <end position="20"/>
    </location>
</feature>
<feature type="transmembrane region" description="Helical; Name=1" evidence="3">
    <location>
        <begin position="21"/>
        <end position="41"/>
    </location>
</feature>
<feature type="topological domain" description="Vacuolar" evidence="1">
    <location>
        <begin position="42"/>
        <end position="282"/>
    </location>
</feature>
<feature type="transmembrane region" description="Helical; Name=2" evidence="3">
    <location>
        <begin position="283"/>
        <end position="303"/>
    </location>
</feature>
<feature type="topological domain" description="Cytoplasmic" evidence="1">
    <location>
        <begin position="304"/>
        <end position="308"/>
    </location>
</feature>
<feature type="transmembrane region" description="Helical; Name=3" evidence="3">
    <location>
        <begin position="309"/>
        <end position="329"/>
    </location>
</feature>
<feature type="topological domain" description="Vacuolar" evidence="1">
    <location>
        <begin position="330"/>
        <end position="363"/>
    </location>
</feature>
<feature type="transmembrane region" description="Helical; Name=4" evidence="3">
    <location>
        <begin position="364"/>
        <end position="384"/>
    </location>
</feature>
<feature type="topological domain" description="Cytoplasmic" evidence="1">
    <location>
        <begin position="385"/>
        <end position="393"/>
    </location>
</feature>
<feature type="transmembrane region" description="Helical; Name=5" evidence="3">
    <location>
        <begin position="394"/>
        <end position="414"/>
    </location>
</feature>
<feature type="topological domain" description="Vacuolar" evidence="1">
    <location>
        <begin position="415"/>
        <end position="425"/>
    </location>
</feature>
<feature type="transmembrane region" description="Helical; Name=6" evidence="3">
    <location>
        <begin position="426"/>
        <end position="446"/>
    </location>
</feature>
<feature type="topological domain" description="Cytoplasmic" evidence="1">
    <location>
        <begin position="447"/>
        <end position="529"/>
    </location>
</feature>
<feature type="transmembrane region" description="Helical; Name=7" evidence="3">
    <location>
        <begin position="530"/>
        <end position="550"/>
    </location>
</feature>
<feature type="topological domain" description="Vacuolar" evidence="1">
    <location>
        <begin position="551"/>
        <end position="563"/>
    </location>
</feature>
<feature type="transmembrane region" description="Helical; Name=8" evidence="3">
    <location>
        <begin position="564"/>
        <end position="584"/>
    </location>
</feature>
<feature type="topological domain" description="Cytoplasmic" evidence="1">
    <location>
        <begin position="585"/>
        <end position="590"/>
    </location>
</feature>
<feature type="transmembrane region" description="Helical; Name=9" evidence="3">
    <location>
        <begin position="591"/>
        <end position="611"/>
    </location>
</feature>
<feature type="topological domain" description="Vacuolar" evidence="1">
    <location>
        <begin position="612"/>
        <end position="850"/>
    </location>
</feature>
<feature type="active site" description="Proton acceptor" evidence="2">
    <location>
        <position position="221"/>
    </location>
</feature>
<feature type="binding site" evidence="2">
    <location>
        <position position="175"/>
    </location>
    <ligand>
        <name>Zn(2+)</name>
        <dbReference type="ChEBI" id="CHEBI:29105"/>
        <label>1</label>
        <note>catalytic</note>
    </ligand>
</feature>
<feature type="binding site" evidence="2">
    <location>
        <position position="187"/>
    </location>
    <ligand>
        <name>Zn(2+)</name>
        <dbReference type="ChEBI" id="CHEBI:29105"/>
        <label>1</label>
        <note>catalytic</note>
    </ligand>
</feature>
<feature type="binding site" evidence="2">
    <location>
        <position position="187"/>
    </location>
    <ligand>
        <name>Zn(2+)</name>
        <dbReference type="ChEBI" id="CHEBI:29105"/>
        <label>2</label>
        <note>catalytic</note>
    </ligand>
</feature>
<feature type="binding site" evidence="2">
    <location>
        <position position="222"/>
    </location>
    <ligand>
        <name>Zn(2+)</name>
        <dbReference type="ChEBI" id="CHEBI:29105"/>
        <label>2</label>
        <note>catalytic</note>
    </ligand>
</feature>
<feature type="glycosylation site" description="N-linked (GlcNAc...) asparagine" evidence="4">
    <location>
        <position position="53"/>
    </location>
</feature>
<feature type="glycosylation site" description="N-linked (GlcNAc...) asparagine" evidence="4">
    <location>
        <position position="116"/>
    </location>
</feature>
<feature type="glycosylation site" description="N-linked (GlcNAc...) asparagine" evidence="4">
    <location>
        <position position="119"/>
    </location>
</feature>
<feature type="glycosylation site" description="N-linked (GlcNAc...) asparagine" evidence="4">
    <location>
        <position position="630"/>
    </location>
</feature>
<feature type="glycosylation site" description="N-linked (GlcNAc...) asparagine" evidence="4">
    <location>
        <position position="658"/>
    </location>
</feature>
<feature type="glycosylation site" description="N-linked (GlcNAc...) asparagine" evidence="4">
    <location>
        <position position="702"/>
    </location>
</feature>
<sequence>MASSRAQWFNPIAFTPWPVTCITTIVYLALLIPILVINLVVPSAPETNPKGVNLTEAWRDLQHLTGGFHPYNSRRNDEVHEWLLSRINSIIRPTVEAGQPSSANDNLPEVFVFDDNRSNLTYSNGGVGKTSIVGVYFESTNIIVYIRGSEDGLENWWEHSNGKPKGKGGVLVNAHYDSVSTGYGATDDGIGVVSLLQLLRYFTTPGNNPRKGLVLLFNNGEEDYLNGAHPPEADTTQAQDDTRHTNIDSLWHMLSASIGTTEGLVSYTGMDFDGKSKDQNKVNSGTGTLGVWFDMFGTAFAVFRLHTLFAISVALLVIAPLVIFVTSVILSKTDRMYLFSMSKSLEGTGDQVSLRGLRGFSRTPIILVIATTIPICLAYLLEKVNPYIVHSSQFSVWSMMFSAWIFLAWFLACAADFFRPSALHRAYSYTWIFIATWIMLVINTVYANQKGIAAGPSTAEFPGAAGEDTDPTESTSLLRGQRTTFANYRSSRPGGAAETDEREDINKGGTFEHEQSWSWTLPRWTWVLQLLLLAPIVLILVGQLALFLTASMCQVGSDGVSTFVVYLACSVFTTLLCIPLFPLIHRFTYHIPTFLFLVFIGTLIYNLVAFPFSPANRLKTFFIQEVDLDNGSNTVSLTGIQPYLTDAINSIPSAAGQNITCDKTTPFGKLERCSWSGLSPNVLGQGRERDNEIDPDKWITYNITKTVGKNKARIEISGRNTRACKLKFDRAVANFQVSGSAVDHRMPPTSRQGVSEIRLWSRTWENTWVVDINWHESADKSDDDDDDHDDENHDAPQNILSGKAICMWSDGNQPGVIPALDEVRLYAPSWIAISKAADGLVEASHSFTIQ</sequence>
<name>PFF1_AJECN</name>
<gene>
    <name type="ORF">HCAG_00168</name>
</gene>
<evidence type="ECO:0000250" key="1">
    <source>
        <dbReference type="UniProtKB" id="P38244"/>
    </source>
</evidence>
<evidence type="ECO:0000250" key="2">
    <source>
        <dbReference type="UniProtKB" id="P80561"/>
    </source>
</evidence>
<evidence type="ECO:0000255" key="3"/>
<evidence type="ECO:0000255" key="4">
    <source>
        <dbReference type="PROSITE-ProRule" id="PRU00498"/>
    </source>
</evidence>
<evidence type="ECO:0000305" key="5"/>
<accession>A6QS12</accession>
<dbReference type="EC" id="3.4.-.-" evidence="5"/>
<dbReference type="EMBL" id="CH476655">
    <property type="protein sequence ID" value="EDN02304.1"/>
    <property type="molecule type" value="Genomic_DNA"/>
</dbReference>
<dbReference type="RefSeq" id="XP_001543122.1">
    <property type="nucleotide sequence ID" value="XM_001543072.1"/>
</dbReference>
<dbReference type="SMR" id="A6QS12"/>
<dbReference type="STRING" id="339724.A6QS12"/>
<dbReference type="GeneID" id="5449652"/>
<dbReference type="KEGG" id="aje:HCAG_00168"/>
<dbReference type="VEuPathDB" id="FungiDB:HCAG_00168"/>
<dbReference type="HOGENOM" id="CLU_006412_1_0_1"/>
<dbReference type="OMA" id="TPWPVTI"/>
<dbReference type="OrthoDB" id="9046at299071"/>
<dbReference type="Proteomes" id="UP000009297">
    <property type="component" value="Unassembled WGS sequence"/>
</dbReference>
<dbReference type="GO" id="GO:0005774">
    <property type="term" value="C:vacuolar membrane"/>
    <property type="evidence" value="ECO:0007669"/>
    <property type="project" value="UniProtKB-SubCell"/>
</dbReference>
<dbReference type="GO" id="GO:0046872">
    <property type="term" value="F:metal ion binding"/>
    <property type="evidence" value="ECO:0007669"/>
    <property type="project" value="UniProtKB-KW"/>
</dbReference>
<dbReference type="GO" id="GO:0008235">
    <property type="term" value="F:metalloexopeptidase activity"/>
    <property type="evidence" value="ECO:0007669"/>
    <property type="project" value="InterPro"/>
</dbReference>
<dbReference type="GO" id="GO:0006508">
    <property type="term" value="P:proteolysis"/>
    <property type="evidence" value="ECO:0007669"/>
    <property type="project" value="UniProtKB-KW"/>
</dbReference>
<dbReference type="Gene3D" id="3.40.630.10">
    <property type="entry name" value="Zn peptidases"/>
    <property type="match status" value="1"/>
</dbReference>
<dbReference type="InterPro" id="IPR045175">
    <property type="entry name" value="M28_fam"/>
</dbReference>
<dbReference type="InterPro" id="IPR007484">
    <property type="entry name" value="Peptidase_M28"/>
</dbReference>
<dbReference type="InterPro" id="IPR053975">
    <property type="entry name" value="PFF1_C"/>
</dbReference>
<dbReference type="InterPro" id="IPR053976">
    <property type="entry name" value="PFF1_TM"/>
</dbReference>
<dbReference type="PANTHER" id="PTHR12147">
    <property type="entry name" value="METALLOPEPTIDASE M28 FAMILY MEMBER"/>
    <property type="match status" value="1"/>
</dbReference>
<dbReference type="PANTHER" id="PTHR12147:SF58">
    <property type="entry name" value="VACUOLAR MEMBRANE PROTEASE"/>
    <property type="match status" value="1"/>
</dbReference>
<dbReference type="Pfam" id="PF04389">
    <property type="entry name" value="Peptidase_M28"/>
    <property type="match status" value="1"/>
</dbReference>
<dbReference type="Pfam" id="PF22250">
    <property type="entry name" value="PFF1_C"/>
    <property type="match status" value="1"/>
</dbReference>
<dbReference type="Pfam" id="PF22251">
    <property type="entry name" value="PFF1_TM"/>
    <property type="match status" value="2"/>
</dbReference>
<dbReference type="SUPFAM" id="SSF53187">
    <property type="entry name" value="Zn-dependent exopeptidases"/>
    <property type="match status" value="1"/>
</dbReference>